<feature type="signal peptide" evidence="4">
    <location>
        <begin position="1"/>
        <end position="19"/>
    </location>
</feature>
<feature type="chain" id="PRO_0000022756" description="Group IID secretory phospholipase A2">
    <location>
        <begin position="20"/>
        <end position="144"/>
    </location>
</feature>
<feature type="active site" evidence="1">
    <location>
        <position position="66"/>
    </location>
</feature>
<feature type="active site" evidence="1">
    <location>
        <position position="111"/>
    </location>
</feature>
<feature type="binding site" evidence="2">
    <location>
        <position position="46"/>
    </location>
    <ligand>
        <name>Ca(2+)</name>
        <dbReference type="ChEBI" id="CHEBI:29108"/>
    </ligand>
</feature>
<feature type="binding site" evidence="2">
    <location>
        <position position="48"/>
    </location>
    <ligand>
        <name>Ca(2+)</name>
        <dbReference type="ChEBI" id="CHEBI:29108"/>
    </ligand>
</feature>
<feature type="binding site" evidence="2">
    <location>
        <position position="50"/>
    </location>
    <ligand>
        <name>Ca(2+)</name>
        <dbReference type="ChEBI" id="CHEBI:29108"/>
    </ligand>
</feature>
<feature type="binding site" evidence="2">
    <location>
        <position position="67"/>
    </location>
    <ligand>
        <name>Ca(2+)</name>
        <dbReference type="ChEBI" id="CHEBI:29108"/>
    </ligand>
</feature>
<feature type="glycosylation site" description="N-linked (GlcNAc...) asparagine" evidence="4">
    <location>
        <position position="99"/>
    </location>
</feature>
<feature type="disulfide bond" evidence="2">
    <location>
        <begin position="45"/>
        <end position="137"/>
    </location>
</feature>
<feature type="disulfide bond" evidence="2">
    <location>
        <begin position="47"/>
        <end position="63"/>
    </location>
</feature>
<feature type="disulfide bond" evidence="2">
    <location>
        <begin position="62"/>
        <end position="117"/>
    </location>
</feature>
<feature type="disulfide bond" evidence="2">
    <location>
        <begin position="68"/>
        <end position="144"/>
    </location>
</feature>
<feature type="disulfide bond" evidence="2">
    <location>
        <begin position="69"/>
        <end position="110"/>
    </location>
</feature>
<feature type="disulfide bond" evidence="2">
    <location>
        <begin position="78"/>
        <end position="103"/>
    </location>
</feature>
<feature type="disulfide bond" evidence="2">
    <location>
        <begin position="96"/>
        <end position="108"/>
    </location>
</feature>
<feature type="splice variant" id="VSP_004508" description="In isoform 2." evidence="14">
    <location>
        <begin position="1"/>
        <end position="26"/>
    </location>
</feature>
<feature type="mutagenesis site" description="Has no effect on Treg effector functions." evidence="10">
    <original>H</original>
    <variation>A</variation>
    <location>
        <position position="66"/>
    </location>
</feature>
<evidence type="ECO:0000250" key="1"/>
<evidence type="ECO:0000250" key="2">
    <source>
        <dbReference type="UniProtKB" id="P14555"/>
    </source>
</evidence>
<evidence type="ECO:0000250" key="3">
    <source>
        <dbReference type="UniProtKB" id="Q9UNK4"/>
    </source>
</evidence>
<evidence type="ECO:0000255" key="4"/>
<evidence type="ECO:0000255" key="5">
    <source>
        <dbReference type="PROSITE-ProRule" id="PRU10035"/>
    </source>
</evidence>
<evidence type="ECO:0000269" key="6">
    <source>
    </source>
</evidence>
<evidence type="ECO:0000269" key="7">
    <source>
    </source>
</evidence>
<evidence type="ECO:0000269" key="8">
    <source>
    </source>
</evidence>
<evidence type="ECO:0000269" key="9">
    <source>
    </source>
</evidence>
<evidence type="ECO:0000269" key="10">
    <source>
    </source>
</evidence>
<evidence type="ECO:0000269" key="11">
    <source>
    </source>
</evidence>
<evidence type="ECO:0000269" key="12">
    <source>
    </source>
</evidence>
<evidence type="ECO:0000269" key="13">
    <source>
    </source>
</evidence>
<evidence type="ECO:0000303" key="14">
    <source>
    </source>
</evidence>
<evidence type="ECO:0000305" key="15"/>
<evidence type="ECO:0000305" key="16">
    <source>
    </source>
</evidence>
<sequence>MRLALLCGLLLAGITATQGGLLNLNKMVTHMTGKKAFFSYWPYGCHCGLGGKGQPKDATDWCCQKHDCCYAHLKIDGCKSLTDNYKYSISQGTIQCSDNGSWCERQLCACDKEVALCLKQNLDSYNKRLRYYWRPRCKGKTPAC</sequence>
<name>PA2GD_MOUSE</name>
<gene>
    <name type="primary">Pla2g2d</name>
    <name type="synonym">Pla2a2</name>
    <name type="synonym">Splash</name>
</gene>
<proteinExistence type="evidence at protein level"/>
<accession>Q9WVF6</accession>
<accession>Q3V4B8</accession>
<accession>Q9JLK0</accession>
<keyword id="KW-0025">Alternative splicing</keyword>
<keyword id="KW-0106">Calcium</keyword>
<keyword id="KW-1003">Cell membrane</keyword>
<keyword id="KW-0963">Cytoplasm</keyword>
<keyword id="KW-1015">Disulfide bond</keyword>
<keyword id="KW-0325">Glycoprotein</keyword>
<keyword id="KW-0378">Hydrolase</keyword>
<keyword id="KW-0395">Inflammatory response</keyword>
<keyword id="KW-0443">Lipid metabolism</keyword>
<keyword id="KW-0472">Membrane</keyword>
<keyword id="KW-0479">Metal-binding</keyword>
<keyword id="KW-1208">Phospholipid metabolism</keyword>
<keyword id="KW-1185">Reference proteome</keyword>
<keyword id="KW-0964">Secreted</keyword>
<keyword id="KW-0732">Signal</keyword>
<organism>
    <name type="scientific">Mus musculus</name>
    <name type="common">Mouse</name>
    <dbReference type="NCBI Taxonomy" id="10090"/>
    <lineage>
        <taxon>Eukaryota</taxon>
        <taxon>Metazoa</taxon>
        <taxon>Chordata</taxon>
        <taxon>Craniata</taxon>
        <taxon>Vertebrata</taxon>
        <taxon>Euteleostomi</taxon>
        <taxon>Mammalia</taxon>
        <taxon>Eutheria</taxon>
        <taxon>Euarchontoglires</taxon>
        <taxon>Glires</taxon>
        <taxon>Rodentia</taxon>
        <taxon>Myomorpha</taxon>
        <taxon>Muroidea</taxon>
        <taxon>Muridae</taxon>
        <taxon>Murinae</taxon>
        <taxon>Mus</taxon>
        <taxon>Mus</taxon>
    </lineage>
</organism>
<comment type="function">
    <text evidence="3 6 7 9 10 11 12 13">Secretory calcium-dependent phospholipase A2 that primarily targets extracellular lipids, exerting anti-inflammatory and immunosuppressive functions (PubMed:10455175, PubMed:10531313, PubMed:23690440, PubMed:26392224). Hydrolyzes the ester bond of the fatty acyl group attached at sn-2 position of phospholipids (phospholipase A2 activity) with preference for phosphatidylethanolamines and phosphatidylglycerols over phosphatidylcholines (By similarity). In draining lymph nodes, selectively hydrolyzes diacyl and alkenyl forms of phosphatidylethanolamines, releasing omega-3 polyunsaturated fatty acids (PUFAs) such as eicosapentaenoate and docosahexaenoate that are precursors of the anti-inflammatory lipid mediators, resolvins (PubMed:23690440). During the resolution phase of acute inflammation drives docosahexaenoate-derived resolvin D1 synthesis, which suppresses dendritic cell activation and T-helper 1 immune response (PubMed:23690440, PubMed:27226632). May act in an autocrine and paracrine manner. Via a mechanism independent of its catalytic activity, promotes differentiation of regulatory T cells (Tregs) and participates in the maintenance of immune tolerance (PubMed:19564598). May contribute to lipid remodeling of cellular membranes and generation of lipid mediators involved in pathogen clearance. Displays bactericidal activity against Gram-positive bacteria by directly hydrolyzing phospholipids of the bacterial membrane (PubMed:11694541).</text>
</comment>
<comment type="catalytic activity">
    <reaction evidence="3">
        <text>a 1,2-diacyl-sn-glycero-3-phosphoethanolamine + H2O = a 1-acyl-sn-glycero-3-phosphoethanolamine + a fatty acid + H(+)</text>
        <dbReference type="Rhea" id="RHEA:44604"/>
        <dbReference type="ChEBI" id="CHEBI:15377"/>
        <dbReference type="ChEBI" id="CHEBI:15378"/>
        <dbReference type="ChEBI" id="CHEBI:28868"/>
        <dbReference type="ChEBI" id="CHEBI:64381"/>
        <dbReference type="ChEBI" id="CHEBI:64612"/>
    </reaction>
    <physiologicalReaction direction="left-to-right" evidence="3">
        <dbReference type="Rhea" id="RHEA:44605"/>
    </physiologicalReaction>
</comment>
<comment type="catalytic activity">
    <reaction evidence="3">
        <text>1-hexadecanoyl-2-(9Z-octadecenoyl)-sn-glycero-3-phosphoethanolamine + H2O = 1-hexadecanoyl-sn-glycero-3-phosphoethanolamine + (9Z)-octadecenoate + H(+)</text>
        <dbReference type="Rhea" id="RHEA:40911"/>
        <dbReference type="ChEBI" id="CHEBI:15377"/>
        <dbReference type="ChEBI" id="CHEBI:15378"/>
        <dbReference type="ChEBI" id="CHEBI:30823"/>
        <dbReference type="ChEBI" id="CHEBI:73004"/>
        <dbReference type="ChEBI" id="CHEBI:73007"/>
    </reaction>
    <physiologicalReaction direction="left-to-right" evidence="3">
        <dbReference type="Rhea" id="RHEA:40912"/>
    </physiologicalReaction>
</comment>
<comment type="catalytic activity">
    <reaction evidence="3">
        <text>1-hexadecanoyl-2-(9Z,12Z-octadecadienoyl)-sn-glycero-3-phosphoethanolamine + H2O = 1-hexadecanoyl-sn-glycero-3-phosphoethanolamine + (9Z,12Z)-octadecadienoate + H(+)</text>
        <dbReference type="Rhea" id="RHEA:40815"/>
        <dbReference type="ChEBI" id="CHEBI:15377"/>
        <dbReference type="ChEBI" id="CHEBI:15378"/>
        <dbReference type="ChEBI" id="CHEBI:30245"/>
        <dbReference type="ChEBI" id="CHEBI:73004"/>
        <dbReference type="ChEBI" id="CHEBI:73008"/>
    </reaction>
    <physiologicalReaction direction="left-to-right" evidence="3">
        <dbReference type="Rhea" id="RHEA:40816"/>
    </physiologicalReaction>
</comment>
<comment type="catalytic activity">
    <reaction evidence="7">
        <text>1,2-dihexadecanoyl-sn-glycero-3-phospho-(1'-sn-glycerol) + H2O = 1-hexadecanoyl-sn-glycero-3-phospho-(1'-sn-glycerol) + hexadecanoate + H(+)</text>
        <dbReference type="Rhea" id="RHEA:45472"/>
        <dbReference type="ChEBI" id="CHEBI:7896"/>
        <dbReference type="ChEBI" id="CHEBI:15377"/>
        <dbReference type="ChEBI" id="CHEBI:15378"/>
        <dbReference type="ChEBI" id="CHEBI:72829"/>
        <dbReference type="ChEBI" id="CHEBI:75158"/>
    </reaction>
    <physiologicalReaction direction="left-to-right" evidence="16">
        <dbReference type="Rhea" id="RHEA:45473"/>
    </physiologicalReaction>
</comment>
<comment type="catalytic activity">
    <reaction evidence="3">
        <text>1-hexadecanoyl-2-(9Z-octadecenoyl)-sn-glycero-3-phospho-(1'-sn-glycerol) + H2O = 1-hexadecanoyl-sn-glycero-3-phospho-(1'-sn-glycerol) + (9Z)-octadecenoate + H(+)</text>
        <dbReference type="Rhea" id="RHEA:40919"/>
        <dbReference type="ChEBI" id="CHEBI:15377"/>
        <dbReference type="ChEBI" id="CHEBI:15378"/>
        <dbReference type="ChEBI" id="CHEBI:30823"/>
        <dbReference type="ChEBI" id="CHEBI:72841"/>
        <dbReference type="ChEBI" id="CHEBI:75158"/>
    </reaction>
    <physiologicalReaction direction="left-to-right" evidence="3">
        <dbReference type="Rhea" id="RHEA:40920"/>
    </physiologicalReaction>
</comment>
<comment type="catalytic activity">
    <reaction evidence="5 7">
        <text>a 1,2-diacyl-sn-glycero-3-phosphocholine + H2O = a 1-acyl-sn-glycero-3-phosphocholine + a fatty acid + H(+)</text>
        <dbReference type="Rhea" id="RHEA:15801"/>
        <dbReference type="ChEBI" id="CHEBI:15377"/>
        <dbReference type="ChEBI" id="CHEBI:15378"/>
        <dbReference type="ChEBI" id="CHEBI:28868"/>
        <dbReference type="ChEBI" id="CHEBI:57643"/>
        <dbReference type="ChEBI" id="CHEBI:58168"/>
        <dbReference type="EC" id="3.1.1.4"/>
    </reaction>
    <physiologicalReaction direction="left-to-right" evidence="16">
        <dbReference type="Rhea" id="RHEA:15802"/>
    </physiologicalReaction>
</comment>
<comment type="catalytic activity">
    <reaction evidence="7">
        <text>1,2-dihexadecanoyl-sn-glycero-3-phosphocholine + H2O = 1-hexadecanoyl-sn-glycero-3-phosphocholine + hexadecanoate + H(+)</text>
        <dbReference type="Rhea" id="RHEA:41223"/>
        <dbReference type="ChEBI" id="CHEBI:7896"/>
        <dbReference type="ChEBI" id="CHEBI:15377"/>
        <dbReference type="ChEBI" id="CHEBI:15378"/>
        <dbReference type="ChEBI" id="CHEBI:72998"/>
        <dbReference type="ChEBI" id="CHEBI:72999"/>
    </reaction>
    <physiologicalReaction direction="left-to-right" evidence="16">
        <dbReference type="Rhea" id="RHEA:41224"/>
    </physiologicalReaction>
</comment>
<comment type="catalytic activity">
    <reaction evidence="3">
        <text>1-hexadecanoyl-2-(9Z-octadecenoyl)-sn-glycero-3-phosphocholine + H2O = 1-hexadecanoyl-sn-glycero-3-phosphocholine + (9Z)-octadecenoate + H(+)</text>
        <dbReference type="Rhea" id="RHEA:38779"/>
        <dbReference type="ChEBI" id="CHEBI:15377"/>
        <dbReference type="ChEBI" id="CHEBI:15378"/>
        <dbReference type="ChEBI" id="CHEBI:30823"/>
        <dbReference type="ChEBI" id="CHEBI:72998"/>
        <dbReference type="ChEBI" id="CHEBI:73001"/>
    </reaction>
    <physiologicalReaction direction="left-to-right" evidence="3">
        <dbReference type="Rhea" id="RHEA:38780"/>
    </physiologicalReaction>
</comment>
<comment type="catalytic activity">
    <reaction evidence="3">
        <text>1-hexadecanoyl-2-(9Z,12Z-octadecadienoyl)-sn-glycero-3-phosphocholine + H2O = (9Z,12Z)-octadecadienoate + 1-hexadecanoyl-sn-glycero-3-phosphocholine + H(+)</text>
        <dbReference type="Rhea" id="RHEA:40811"/>
        <dbReference type="ChEBI" id="CHEBI:15377"/>
        <dbReference type="ChEBI" id="CHEBI:15378"/>
        <dbReference type="ChEBI" id="CHEBI:30245"/>
        <dbReference type="ChEBI" id="CHEBI:72998"/>
        <dbReference type="ChEBI" id="CHEBI:73002"/>
    </reaction>
    <physiologicalReaction direction="left-to-right" evidence="3">
        <dbReference type="Rhea" id="RHEA:40812"/>
    </physiologicalReaction>
</comment>
<comment type="catalytic activity">
    <reaction evidence="3">
        <text>1-hexadecanoyl-2-(4Z,7Z,10Z,13Z,16Z,19Z-docosahexaenoyl)-sn-glycero-3-phosphocholine + H2O = (4Z,7Z,10Z,13Z,16Z,19Z)-docosahexaenoate + 1-hexadecanoyl-sn-glycero-3-phosphocholine + H(+)</text>
        <dbReference type="Rhea" id="RHEA:41231"/>
        <dbReference type="ChEBI" id="CHEBI:15377"/>
        <dbReference type="ChEBI" id="CHEBI:15378"/>
        <dbReference type="ChEBI" id="CHEBI:72998"/>
        <dbReference type="ChEBI" id="CHEBI:74963"/>
        <dbReference type="ChEBI" id="CHEBI:77016"/>
    </reaction>
    <physiologicalReaction direction="left-to-right" evidence="3">
        <dbReference type="Rhea" id="RHEA:41232"/>
    </physiologicalReaction>
</comment>
<comment type="cofactor">
    <cofactor evidence="3">
        <name>Ca(2+)</name>
        <dbReference type="ChEBI" id="CHEBI:29108"/>
    </cofactor>
    <text evidence="3">Binds 1 Ca(2+) ion per subunit.</text>
</comment>
<comment type="subcellular location">
    <molecule>Isoform 1</molecule>
    <subcellularLocation>
        <location evidence="6">Secreted</location>
    </subcellularLocation>
    <subcellularLocation>
        <location evidence="10">Cell membrane</location>
    </subcellularLocation>
    <text evidence="10">Localizes to cell membrane likely through binding to heparan sulfate proteoglycans.</text>
</comment>
<comment type="subcellular location">
    <molecule>Isoform 2</molecule>
    <subcellularLocation>
        <location evidence="15">Cytoplasm</location>
    </subcellularLocation>
</comment>
<comment type="alternative products">
    <event type="alternative splicing"/>
    <isoform>
        <id>Q9WVF6-1</id>
        <name>1</name>
        <sequence type="displayed"/>
    </isoform>
    <isoform>
        <id>Q9WVF6-2</id>
        <name>2</name>
        <sequence type="described" ref="VSP_004508"/>
    </isoform>
</comment>
<comment type="tissue specificity">
    <text evidence="6 7 8 10 11 12">Highly expressed in secondary lymphoid tissues, spleen and lymph nodes. Expressed at a lesser extent in thymus (PubMed:10455175, PubMed:10531313, PubMed:11196711, PubMed:23690440). Expressed in CD4-positive, IL2RA/CD25-positive, FOXP3-positive Tregs (at protein level) (PubMed:19564598, PubMed:23690440). Expressed in myeloid cell subsets resident in spleen and lymph nodes, ITGAX/CD11C-positive dendritic cells and macrophages (at protein level). Enriched in CD4-positive, ITGAM/CD11B-positive dendritic cell subset (PubMed:19564598, PubMed:23690440). Expressed in pulmonary ITGAX/CD11C-positive dendritic cell subset (at protein level) (PubMed:26392224).</text>
</comment>
<comment type="developmental stage">
    <text evidence="8">Undetectable in embryonic spleens. Weak expression is detected the first week after birth, with further increase to normal levels by 4-6 weeks after birth.</text>
</comment>
<comment type="induction">
    <text evidence="6 10 12">Up-regulated in thymus upon endotoxin challenge (PubMed:10455175). Up-regulated during Treg differention in response to TGFB1 (PubMed:19564598). Up-regulated in pulmonary ITGAX/CD11C-positive dendritic cell subset upon chronic oxidative stress associated with aging (PubMed:26392224).</text>
</comment>
<comment type="disruption phenotype">
    <text evidence="11 12 13">Knockout mice are born at the expected Mendelian rate and have normal embryonic and postnatal development (PubMed:23690440). They are susceptible to acute and chronic inflammatory reactions and resistant to tumorigenesis. In a model of hapten-induced contact hypersensitivity, mutant mice show an enhanced T-helper 1 immune response in skin lymph nodes at sensitization phase followed by delayed inflammation resolution with more severe ear swelling, epidermal hyperplasia, and inflammatory cell infiltration at elicitation phase (PubMed:23690440, PubMed:27226632). In a psoriasis model, mutant mice show enhanced T-helper 17 immune response and epidermal hyperplasia associated with decreased synthesis of omega-3 PUFAs (PubMed:27226632). In a model of chemically-induced skin carcinogenesis, mutant mice show resistance to cutaneous papilloma formation (PubMed:27226632). In response to SARS-CoV infection, mutant middle-aged (10-13 month old) mice mount a potent antiviral T cell response, resulting in more rapid virus clearance and significantly decreased mortality compared with wild-type ones. This represents a relevant model for SARS-CoV increased susceptibility with aging in human (PubMed:26392224).</text>
</comment>
<comment type="similarity">
    <text evidence="15">Belongs to the phospholipase A2 family.</text>
</comment>
<dbReference type="EC" id="3.1.1.4" evidence="7"/>
<dbReference type="EMBL" id="AF112983">
    <property type="protein sequence ID" value="AAD51391.1"/>
    <property type="molecule type" value="mRNA"/>
</dbReference>
<dbReference type="EMBL" id="AF124374">
    <property type="protein sequence ID" value="AAD42773.1"/>
    <property type="molecule type" value="mRNA"/>
</dbReference>
<dbReference type="EMBL" id="AF188624">
    <property type="protein sequence ID" value="AAF09019.1"/>
    <property type="molecule type" value="Genomic_DNA"/>
</dbReference>
<dbReference type="EMBL" id="AF169407">
    <property type="protein sequence ID" value="AAF42987.1"/>
    <property type="molecule type" value="mRNA"/>
</dbReference>
<dbReference type="EMBL" id="AF169408">
    <property type="protein sequence ID" value="AAF42988.1"/>
    <property type="molecule type" value="mRNA"/>
</dbReference>
<dbReference type="EMBL" id="AK004232">
    <property type="protein sequence ID" value="BAE43166.1"/>
    <property type="molecule type" value="mRNA"/>
</dbReference>
<dbReference type="EMBL" id="AK018005">
    <property type="protein sequence ID" value="BAB31033.1"/>
    <property type="molecule type" value="mRNA"/>
</dbReference>
<dbReference type="CCDS" id="CCDS18833.1">
    <molecule id="Q9WVF6-1"/>
</dbReference>
<dbReference type="CCDS" id="CCDS84811.1">
    <molecule id="Q9WVF6-2"/>
</dbReference>
<dbReference type="RefSeq" id="NP_001334159.1">
    <molecule id="Q9WVF6-2"/>
    <property type="nucleotide sequence ID" value="NM_001347230.1"/>
</dbReference>
<dbReference type="RefSeq" id="NP_035239.1">
    <molecule id="Q9WVF6-1"/>
    <property type="nucleotide sequence ID" value="NM_011109.3"/>
</dbReference>
<dbReference type="SMR" id="Q9WVF6"/>
<dbReference type="FunCoup" id="Q9WVF6">
    <property type="interactions" value="512"/>
</dbReference>
<dbReference type="STRING" id="10090.ENSMUSP00000030528"/>
<dbReference type="BindingDB" id="Q9WVF6"/>
<dbReference type="ChEMBL" id="CHEMBL5537"/>
<dbReference type="GlyCosmos" id="Q9WVF6">
    <property type="glycosylation" value="1 site, No reported glycans"/>
</dbReference>
<dbReference type="GlyGen" id="Q9WVF6">
    <property type="glycosylation" value="1 site"/>
</dbReference>
<dbReference type="PhosphoSitePlus" id="Q9WVF6"/>
<dbReference type="PaxDb" id="10090-ENSMUSP00000030528"/>
<dbReference type="ProteomicsDB" id="294236">
    <molecule id="Q9WVF6-1"/>
</dbReference>
<dbReference type="ProteomicsDB" id="294237">
    <molecule id="Q9WVF6-2"/>
</dbReference>
<dbReference type="Antibodypedia" id="47984">
    <property type="antibodies" value="188 antibodies from 20 providers"/>
</dbReference>
<dbReference type="DNASU" id="18782"/>
<dbReference type="Ensembl" id="ENSMUST00000030528.9">
    <molecule id="Q9WVF6-1"/>
    <property type="protein sequence ID" value="ENSMUSP00000030528.3"/>
    <property type="gene ID" value="ENSMUSG00000041202.13"/>
</dbReference>
<dbReference type="Ensembl" id="ENSMUST00000105806.2">
    <molecule id="Q9WVF6-2"/>
    <property type="protein sequence ID" value="ENSMUSP00000101432.2"/>
    <property type="gene ID" value="ENSMUSG00000041202.13"/>
</dbReference>
<dbReference type="GeneID" id="18782"/>
<dbReference type="KEGG" id="mmu:18782"/>
<dbReference type="UCSC" id="uc008vlg.1">
    <molecule id="Q9WVF6-1"/>
    <property type="organism name" value="mouse"/>
</dbReference>
<dbReference type="AGR" id="MGI:1341796"/>
<dbReference type="CTD" id="26279"/>
<dbReference type="MGI" id="MGI:1341796">
    <property type="gene designation" value="Pla2g2d"/>
</dbReference>
<dbReference type="VEuPathDB" id="HostDB:ENSMUSG00000041202"/>
<dbReference type="eggNOG" id="KOG4087">
    <property type="taxonomic scope" value="Eukaryota"/>
</dbReference>
<dbReference type="GeneTree" id="ENSGT00940000161938"/>
<dbReference type="HOGENOM" id="CLU_090683_3_0_1"/>
<dbReference type="InParanoid" id="Q9WVF6"/>
<dbReference type="OMA" id="GDIQCSD"/>
<dbReference type="OrthoDB" id="5841574at2759"/>
<dbReference type="PhylomeDB" id="Q9WVF6"/>
<dbReference type="TreeFam" id="TF319283"/>
<dbReference type="Reactome" id="R-MMU-1482788">
    <property type="pathway name" value="Acyl chain remodelling of PC"/>
</dbReference>
<dbReference type="Reactome" id="R-MMU-1482801">
    <property type="pathway name" value="Acyl chain remodelling of PS"/>
</dbReference>
<dbReference type="Reactome" id="R-MMU-1482839">
    <property type="pathway name" value="Acyl chain remodelling of PE"/>
</dbReference>
<dbReference type="Reactome" id="R-MMU-1482922">
    <property type="pathway name" value="Acyl chain remodelling of PI"/>
</dbReference>
<dbReference type="Reactome" id="R-MMU-1482925">
    <property type="pathway name" value="Acyl chain remodelling of PG"/>
</dbReference>
<dbReference type="Reactome" id="R-MMU-1483166">
    <property type="pathway name" value="Synthesis of PA"/>
</dbReference>
<dbReference type="BioGRID-ORCS" id="18782">
    <property type="hits" value="2 hits in 80 CRISPR screens"/>
</dbReference>
<dbReference type="ChiTaRS" id="Pla2g2d">
    <property type="organism name" value="mouse"/>
</dbReference>
<dbReference type="PRO" id="PR:Q9WVF6"/>
<dbReference type="Proteomes" id="UP000000589">
    <property type="component" value="Chromosome 4"/>
</dbReference>
<dbReference type="RNAct" id="Q9WVF6">
    <property type="molecule type" value="protein"/>
</dbReference>
<dbReference type="Bgee" id="ENSMUSG00000041202">
    <property type="expression patterns" value="Expressed in mesenteric lymph node and 58 other cell types or tissues"/>
</dbReference>
<dbReference type="ExpressionAtlas" id="Q9WVF6">
    <property type="expression patterns" value="baseline and differential"/>
</dbReference>
<dbReference type="GO" id="GO:0005737">
    <property type="term" value="C:cytoplasm"/>
    <property type="evidence" value="ECO:0007669"/>
    <property type="project" value="UniProtKB-SubCell"/>
</dbReference>
<dbReference type="GO" id="GO:0005576">
    <property type="term" value="C:extracellular region"/>
    <property type="evidence" value="ECO:0000314"/>
    <property type="project" value="UniProtKB"/>
</dbReference>
<dbReference type="GO" id="GO:0005886">
    <property type="term" value="C:plasma membrane"/>
    <property type="evidence" value="ECO:0007669"/>
    <property type="project" value="UniProtKB-SubCell"/>
</dbReference>
<dbReference type="GO" id="GO:0005509">
    <property type="term" value="F:calcium ion binding"/>
    <property type="evidence" value="ECO:0007669"/>
    <property type="project" value="InterPro"/>
</dbReference>
<dbReference type="GO" id="GO:0047498">
    <property type="term" value="F:calcium-dependent phospholipase A2 activity"/>
    <property type="evidence" value="ECO:0000314"/>
    <property type="project" value="UniProtKB"/>
</dbReference>
<dbReference type="GO" id="GO:0043395">
    <property type="term" value="F:heparan sulfate proteoglycan binding"/>
    <property type="evidence" value="ECO:0000314"/>
    <property type="project" value="MGI"/>
</dbReference>
<dbReference type="GO" id="GO:0008201">
    <property type="term" value="F:heparin binding"/>
    <property type="evidence" value="ECO:0000314"/>
    <property type="project" value="MGI"/>
</dbReference>
<dbReference type="GO" id="GO:0050482">
    <property type="term" value="P:arachidonate secretion"/>
    <property type="evidence" value="ECO:0007669"/>
    <property type="project" value="InterPro"/>
</dbReference>
<dbReference type="GO" id="GO:0002361">
    <property type="term" value="P:CD4-positive, CD25-positive, alpha-beta regulatory T cell differentiation"/>
    <property type="evidence" value="ECO:0000314"/>
    <property type="project" value="MGI"/>
</dbReference>
<dbReference type="GO" id="GO:0006954">
    <property type="term" value="P:inflammatory response"/>
    <property type="evidence" value="ECO:0007669"/>
    <property type="project" value="UniProtKB-KW"/>
</dbReference>
<dbReference type="GO" id="GO:0016042">
    <property type="term" value="P:lipid catabolic process"/>
    <property type="evidence" value="ECO:0007669"/>
    <property type="project" value="InterPro"/>
</dbReference>
<dbReference type="GO" id="GO:0050868">
    <property type="term" value="P:negative regulation of T cell activation"/>
    <property type="evidence" value="ECO:0000314"/>
    <property type="project" value="MGI"/>
</dbReference>
<dbReference type="GO" id="GO:0042130">
    <property type="term" value="P:negative regulation of T cell proliferation"/>
    <property type="evidence" value="ECO:0000314"/>
    <property type="project" value="MGI"/>
</dbReference>
<dbReference type="GO" id="GO:0046470">
    <property type="term" value="P:phosphatidylcholine metabolic process"/>
    <property type="evidence" value="ECO:0000314"/>
    <property type="project" value="UniProtKB"/>
</dbReference>
<dbReference type="GO" id="GO:0046337">
    <property type="term" value="P:phosphatidylethanolamine metabolic process"/>
    <property type="evidence" value="ECO:0000314"/>
    <property type="project" value="UniProtKB"/>
</dbReference>
<dbReference type="GO" id="GO:0046471">
    <property type="term" value="P:phosphatidylglycerol metabolic process"/>
    <property type="evidence" value="ECO:0000314"/>
    <property type="project" value="UniProtKB"/>
</dbReference>
<dbReference type="GO" id="GO:0002864">
    <property type="term" value="P:regulation of acute inflammatory response to antigenic stimulus"/>
    <property type="evidence" value="ECO:0000315"/>
    <property type="project" value="UniProtKB"/>
</dbReference>
<dbReference type="CDD" id="cd00125">
    <property type="entry name" value="PLA2c"/>
    <property type="match status" value="1"/>
</dbReference>
<dbReference type="FunFam" id="1.20.90.10:FF:000001">
    <property type="entry name" value="Basic phospholipase A2 homolog"/>
    <property type="match status" value="1"/>
</dbReference>
<dbReference type="Gene3D" id="1.20.90.10">
    <property type="entry name" value="Phospholipase A2 domain"/>
    <property type="match status" value="1"/>
</dbReference>
<dbReference type="InterPro" id="IPR001211">
    <property type="entry name" value="PLipase_A2"/>
</dbReference>
<dbReference type="InterPro" id="IPR033112">
    <property type="entry name" value="PLipase_A2_Asp_AS"/>
</dbReference>
<dbReference type="InterPro" id="IPR016090">
    <property type="entry name" value="PLipase_A2_dom"/>
</dbReference>
<dbReference type="InterPro" id="IPR036444">
    <property type="entry name" value="PLipase_A2_dom_sf"/>
</dbReference>
<dbReference type="InterPro" id="IPR033113">
    <property type="entry name" value="PLipase_A2_His_AS"/>
</dbReference>
<dbReference type="PANTHER" id="PTHR11716:SF57">
    <property type="entry name" value="GROUP IID SECRETORY PHOSPHOLIPASE A2"/>
    <property type="match status" value="1"/>
</dbReference>
<dbReference type="PANTHER" id="PTHR11716">
    <property type="entry name" value="PHOSPHOLIPASE A2 FAMILY MEMBER"/>
    <property type="match status" value="1"/>
</dbReference>
<dbReference type="Pfam" id="PF00068">
    <property type="entry name" value="Phospholip_A2_1"/>
    <property type="match status" value="1"/>
</dbReference>
<dbReference type="PRINTS" id="PR00389">
    <property type="entry name" value="PHPHLIPASEA2"/>
</dbReference>
<dbReference type="SMART" id="SM00085">
    <property type="entry name" value="PA2c"/>
    <property type="match status" value="1"/>
</dbReference>
<dbReference type="SUPFAM" id="SSF48619">
    <property type="entry name" value="Phospholipase A2, PLA2"/>
    <property type="match status" value="1"/>
</dbReference>
<dbReference type="PROSITE" id="PS00119">
    <property type="entry name" value="PA2_ASP"/>
    <property type="match status" value="1"/>
</dbReference>
<dbReference type="PROSITE" id="PS00118">
    <property type="entry name" value="PA2_HIS"/>
    <property type="match status" value="1"/>
</dbReference>
<protein>
    <recommendedName>
        <fullName>Group IID secretory phospholipase A2</fullName>
        <shortName>GIID sPLA2</shortName>
        <shortName>sPLA2-IID</shortName>
        <ecNumber evidence="7">3.1.1.4</ecNumber>
    </recommendedName>
    <alternativeName>
        <fullName>PLA2IID</fullName>
    </alternativeName>
    <alternativeName>
        <fullName>Phosphatidylcholine 2-acylhydrolase 2D</fullName>
    </alternativeName>
    <alternativeName>
        <fullName>Secretory-type PLA, stroma-associated homolog</fullName>
    </alternativeName>
</protein>
<reference key="1">
    <citation type="journal article" date="1999" name="J. Biol. Chem.">
        <title>Cloning and characterization of novel mouse and human secretory phospholipase A2s.</title>
        <authorList>
            <person name="Ishizaki J."/>
            <person name="Suzuki N."/>
            <person name="Higashino K."/>
            <person name="Yokota Y."/>
            <person name="Ono T."/>
            <person name="Kawamoto K."/>
            <person name="Fujii N."/>
            <person name="Arita H."/>
            <person name="Hanasaki K."/>
        </authorList>
    </citation>
    <scope>NUCLEOTIDE SEQUENCE [MRNA] (ISOFORM 1)</scope>
    <scope>FUNCTION</scope>
    <scope>TISSUE SPECIFICITY</scope>
    <scope>INDUCTION BY LIPOPOLYSACCHARIDE</scope>
    <scope>SUBCELLULAR LOCATION (ISOFORM 1)</scope>
    <source>
        <strain>BALB/cJ</strain>
    </source>
</reference>
<reference key="2">
    <citation type="journal article" date="1999" name="J. Biol. Chem.">
        <title>Cloning and recombinant expression of a novel mouse-secreted phospholipase A2.</title>
        <authorList>
            <person name="Valentin E."/>
            <person name="Koduri R.S."/>
            <person name="Scimeca J.-C."/>
            <person name="Carle G."/>
            <person name="Gelb M.H."/>
            <person name="Lazdunski M."/>
            <person name="Lambeau G."/>
        </authorList>
    </citation>
    <scope>NUCLEOTIDE SEQUENCE [MRNA] (ISOFORM 1)</scope>
</reference>
<reference key="3">
    <citation type="journal article" date="2000" name="Genes Immun.">
        <title>SPLASH (PLA(2)IID), a novel member of phospholipase A2 family, is associated with lymphotoxin-deficiency.</title>
        <authorList>
            <person name="Shakhov A.N."/>
            <person name="Rubtsov A.V."/>
            <person name="Lyakhov I.G."/>
            <person name="Tumanov A.V."/>
            <person name="Nedospasov S.A."/>
        </authorList>
    </citation>
    <scope>NUCLEOTIDE SEQUENCE [GENOMIC DNA] (ISOFORMS 1 AND 2)</scope>
    <scope>TISSUE SPECIFICITY</scope>
    <scope>DEVELOPMENTAL STAGE</scope>
    <source>
        <strain>C57BL/6 X 129</strain>
    </source>
</reference>
<reference key="4">
    <citation type="journal article" date="2005" name="Science">
        <title>The transcriptional landscape of the mammalian genome.</title>
        <authorList>
            <person name="Carninci P."/>
            <person name="Kasukawa T."/>
            <person name="Katayama S."/>
            <person name="Gough J."/>
            <person name="Frith M.C."/>
            <person name="Maeda N."/>
            <person name="Oyama R."/>
            <person name="Ravasi T."/>
            <person name="Lenhard B."/>
            <person name="Wells C."/>
            <person name="Kodzius R."/>
            <person name="Shimokawa K."/>
            <person name="Bajic V.B."/>
            <person name="Brenner S.E."/>
            <person name="Batalov S."/>
            <person name="Forrest A.R."/>
            <person name="Zavolan M."/>
            <person name="Davis M.J."/>
            <person name="Wilming L.G."/>
            <person name="Aidinis V."/>
            <person name="Allen J.E."/>
            <person name="Ambesi-Impiombato A."/>
            <person name="Apweiler R."/>
            <person name="Aturaliya R.N."/>
            <person name="Bailey T.L."/>
            <person name="Bansal M."/>
            <person name="Baxter L."/>
            <person name="Beisel K.W."/>
            <person name="Bersano T."/>
            <person name="Bono H."/>
            <person name="Chalk A.M."/>
            <person name="Chiu K.P."/>
            <person name="Choudhary V."/>
            <person name="Christoffels A."/>
            <person name="Clutterbuck D.R."/>
            <person name="Crowe M.L."/>
            <person name="Dalla E."/>
            <person name="Dalrymple B.P."/>
            <person name="de Bono B."/>
            <person name="Della Gatta G."/>
            <person name="di Bernardo D."/>
            <person name="Down T."/>
            <person name="Engstrom P."/>
            <person name="Fagiolini M."/>
            <person name="Faulkner G."/>
            <person name="Fletcher C.F."/>
            <person name="Fukushima T."/>
            <person name="Furuno M."/>
            <person name="Futaki S."/>
            <person name="Gariboldi M."/>
            <person name="Georgii-Hemming P."/>
            <person name="Gingeras T.R."/>
            <person name="Gojobori T."/>
            <person name="Green R.E."/>
            <person name="Gustincich S."/>
            <person name="Harbers M."/>
            <person name="Hayashi Y."/>
            <person name="Hensch T.K."/>
            <person name="Hirokawa N."/>
            <person name="Hill D."/>
            <person name="Huminiecki L."/>
            <person name="Iacono M."/>
            <person name="Ikeo K."/>
            <person name="Iwama A."/>
            <person name="Ishikawa T."/>
            <person name="Jakt M."/>
            <person name="Kanapin A."/>
            <person name="Katoh M."/>
            <person name="Kawasawa Y."/>
            <person name="Kelso J."/>
            <person name="Kitamura H."/>
            <person name="Kitano H."/>
            <person name="Kollias G."/>
            <person name="Krishnan S.P."/>
            <person name="Kruger A."/>
            <person name="Kummerfeld S.K."/>
            <person name="Kurochkin I.V."/>
            <person name="Lareau L.F."/>
            <person name="Lazarevic D."/>
            <person name="Lipovich L."/>
            <person name="Liu J."/>
            <person name="Liuni S."/>
            <person name="McWilliam S."/>
            <person name="Madan Babu M."/>
            <person name="Madera M."/>
            <person name="Marchionni L."/>
            <person name="Matsuda H."/>
            <person name="Matsuzawa S."/>
            <person name="Miki H."/>
            <person name="Mignone F."/>
            <person name="Miyake S."/>
            <person name="Morris K."/>
            <person name="Mottagui-Tabar S."/>
            <person name="Mulder N."/>
            <person name="Nakano N."/>
            <person name="Nakauchi H."/>
            <person name="Ng P."/>
            <person name="Nilsson R."/>
            <person name="Nishiguchi S."/>
            <person name="Nishikawa S."/>
            <person name="Nori F."/>
            <person name="Ohara O."/>
            <person name="Okazaki Y."/>
            <person name="Orlando V."/>
            <person name="Pang K.C."/>
            <person name="Pavan W.J."/>
            <person name="Pavesi G."/>
            <person name="Pesole G."/>
            <person name="Petrovsky N."/>
            <person name="Piazza S."/>
            <person name="Reed J."/>
            <person name="Reid J.F."/>
            <person name="Ring B.Z."/>
            <person name="Ringwald M."/>
            <person name="Rost B."/>
            <person name="Ruan Y."/>
            <person name="Salzberg S.L."/>
            <person name="Sandelin A."/>
            <person name="Schneider C."/>
            <person name="Schoenbach C."/>
            <person name="Sekiguchi K."/>
            <person name="Semple C.A."/>
            <person name="Seno S."/>
            <person name="Sessa L."/>
            <person name="Sheng Y."/>
            <person name="Shibata Y."/>
            <person name="Shimada H."/>
            <person name="Shimada K."/>
            <person name="Silva D."/>
            <person name="Sinclair B."/>
            <person name="Sperling S."/>
            <person name="Stupka E."/>
            <person name="Sugiura K."/>
            <person name="Sultana R."/>
            <person name="Takenaka Y."/>
            <person name="Taki K."/>
            <person name="Tammoja K."/>
            <person name="Tan S.L."/>
            <person name="Tang S."/>
            <person name="Taylor M.S."/>
            <person name="Tegner J."/>
            <person name="Teichmann S.A."/>
            <person name="Ueda H.R."/>
            <person name="van Nimwegen E."/>
            <person name="Verardo R."/>
            <person name="Wei C.L."/>
            <person name="Yagi K."/>
            <person name="Yamanishi H."/>
            <person name="Zabarovsky E."/>
            <person name="Zhu S."/>
            <person name="Zimmer A."/>
            <person name="Hide W."/>
            <person name="Bult C."/>
            <person name="Grimmond S.M."/>
            <person name="Teasdale R.D."/>
            <person name="Liu E.T."/>
            <person name="Brusic V."/>
            <person name="Quackenbush J."/>
            <person name="Wahlestedt C."/>
            <person name="Mattick J.S."/>
            <person name="Hume D.A."/>
            <person name="Kai C."/>
            <person name="Sasaki D."/>
            <person name="Tomaru Y."/>
            <person name="Fukuda S."/>
            <person name="Kanamori-Katayama M."/>
            <person name="Suzuki M."/>
            <person name="Aoki J."/>
            <person name="Arakawa T."/>
            <person name="Iida J."/>
            <person name="Imamura K."/>
            <person name="Itoh M."/>
            <person name="Kato T."/>
            <person name="Kawaji H."/>
            <person name="Kawagashira N."/>
            <person name="Kawashima T."/>
            <person name="Kojima M."/>
            <person name="Kondo S."/>
            <person name="Konno H."/>
            <person name="Nakano K."/>
            <person name="Ninomiya N."/>
            <person name="Nishio T."/>
            <person name="Okada M."/>
            <person name="Plessy C."/>
            <person name="Shibata K."/>
            <person name="Shiraki T."/>
            <person name="Suzuki S."/>
            <person name="Tagami M."/>
            <person name="Waki K."/>
            <person name="Watahiki A."/>
            <person name="Okamura-Oho Y."/>
            <person name="Suzuki H."/>
            <person name="Kawai J."/>
            <person name="Hayashizaki Y."/>
        </authorList>
    </citation>
    <scope>NUCLEOTIDE SEQUENCE [LARGE SCALE MRNA] (ISOFORMS 1 AND 2)</scope>
    <source>
        <strain>C57BL/6J</strain>
        <tissue>Thymus</tissue>
    </source>
</reference>
<reference key="5">
    <citation type="journal article" date="1999" name="J. Biol. Chem.">
        <title>On the diversity of secreted phospholipases A2. Cloning, tissue distribution, and functional expression of two novel mouse group II enzymes.</title>
        <authorList>
            <person name="Valentin E."/>
            <person name="Ghomashchi F."/>
            <person name="Gelb M.H."/>
            <person name="Lazdunski M."/>
            <person name="Lambeau G."/>
        </authorList>
    </citation>
    <scope>FUNCTION</scope>
    <scope>CATALYTIC ACTIVITY</scope>
    <scope>TISSUE SPECIFICITY</scope>
</reference>
<reference key="6">
    <citation type="journal article" date="2002" name="J. Biol. Chem.">
        <title>Bactericidal properties of human and murine groups I, II, V, X, and XII secreted phospholipases A(2).</title>
        <authorList>
            <person name="Koduri R.S."/>
            <person name="Groenroos J.O."/>
            <person name="Laine V.J."/>
            <person name="Le Calvez C."/>
            <person name="Lambeau G."/>
            <person name="Nevalainen T.J."/>
            <person name="Gelb M.H."/>
        </authorList>
    </citation>
    <scope>FUNCTION</scope>
</reference>
<reference key="7">
    <citation type="journal article" date="2009" name="Proc. Natl. Acad. Sci. U.S.A.">
        <title>Secretory phospholipase A2-IID is an effector molecule of CD4+CD25+ regulatory T cells.</title>
        <authorList>
            <person name="von Allmen C.E."/>
            <person name="Schmitz N."/>
            <person name="Bauer M."/>
            <person name="Hinton H.J."/>
            <person name="Kurrer M.O."/>
            <person name="Buser R.B."/>
            <person name="Gwerder M."/>
            <person name="Muntwiler S."/>
            <person name="Sparwasser T."/>
            <person name="Beerli R.R."/>
            <person name="Bachmann M.F."/>
        </authorList>
    </citation>
    <scope>FUNCTION</scope>
    <scope>TISSUE SPECIFICITY</scope>
    <scope>INDUCTION BY TGFB1</scope>
    <scope>SUBCELLULAR LOCATION (ISOFORM 1)</scope>
    <scope>MUTAGENESIS OF HIS-66</scope>
</reference>
<reference key="8">
    <citation type="journal article" date="2013" name="J. Exp. Med.">
        <title>Lymphoid tissue phospholipase A2 group IID resolves contact hypersensitivity by driving antiinflammatory lipid mediators.</title>
        <authorList>
            <person name="Miki Y."/>
            <person name="Yamamoto K."/>
            <person name="Taketomi Y."/>
            <person name="Sato H."/>
            <person name="Shimo K."/>
            <person name="Kobayashi T."/>
            <person name="Ishikawa Y."/>
            <person name="Ishii T."/>
            <person name="Nakanishi H."/>
            <person name="Ikeda K."/>
            <person name="Taguchi R."/>
            <person name="Kabashima K."/>
            <person name="Arita M."/>
            <person name="Arai H."/>
            <person name="Lambeau G."/>
            <person name="Bollinger J.M."/>
            <person name="Hara S."/>
            <person name="Gelb M.H."/>
            <person name="Murakami M."/>
        </authorList>
    </citation>
    <scope>FUNCTION</scope>
    <scope>TISSUE SPECIFICITY</scope>
    <scope>DISRUPTION PHENOTYPE</scope>
</reference>
<reference key="9">
    <citation type="journal article" date="2015" name="J. Exp. Med.">
        <title>Critical role of phospholipase A2 group IID in age-related susceptibility to severe acute respiratory syndrome-CoV infection.</title>
        <authorList>
            <person name="Vijay R."/>
            <person name="Hua X."/>
            <person name="Meyerholz D.K."/>
            <person name="Miki Y."/>
            <person name="Yamamoto K."/>
            <person name="Gelb M."/>
            <person name="Murakami M."/>
            <person name="Perlman S."/>
        </authorList>
    </citation>
    <scope>FUNCTION</scope>
    <scope>DISRUPTION PHENOTYPE</scope>
    <scope>TISSUE SPECIFICITY</scope>
    <scope>INDUCTION</scope>
</reference>
<reference key="10">
    <citation type="journal article" date="2016" name="J. Biol. Chem.">
        <title>Dual Roles of Group IID Phospholipase A2 in Inflammation and Cancer.</title>
        <authorList>
            <person name="Miki Y."/>
            <person name="Kidoguchi Y."/>
            <person name="Sato M."/>
            <person name="Taketomi Y."/>
            <person name="Taya C."/>
            <person name="Muramatsu K."/>
            <person name="Gelb M.H."/>
            <person name="Yamamoto K."/>
            <person name="Murakami M."/>
        </authorList>
    </citation>
    <scope>FUNCTION</scope>
    <scope>DISRUPTION PHENOTYPE</scope>
</reference>